<feature type="chain" id="PRO_0000235478" description="Phospho-N-acetylmuramoyl-pentapeptide-transferase">
    <location>
        <begin position="1"/>
        <end position="385"/>
    </location>
</feature>
<feature type="transmembrane region" description="Helical" evidence="1">
    <location>
        <begin position="23"/>
        <end position="43"/>
    </location>
</feature>
<feature type="transmembrane region" description="Helical" evidence="1">
    <location>
        <begin position="79"/>
        <end position="99"/>
    </location>
</feature>
<feature type="transmembrane region" description="Helical" evidence="1">
    <location>
        <begin position="103"/>
        <end position="123"/>
    </location>
</feature>
<feature type="transmembrane region" description="Helical" evidence="1">
    <location>
        <begin position="135"/>
        <end position="155"/>
    </location>
</feature>
<feature type="transmembrane region" description="Helical" evidence="1">
    <location>
        <begin position="186"/>
        <end position="206"/>
    </location>
</feature>
<feature type="transmembrane region" description="Helical" evidence="1">
    <location>
        <begin position="218"/>
        <end position="238"/>
    </location>
</feature>
<feature type="transmembrane region" description="Helical" evidence="1">
    <location>
        <begin position="258"/>
        <end position="278"/>
    </location>
</feature>
<feature type="transmembrane region" description="Helical" evidence="1">
    <location>
        <begin position="282"/>
        <end position="302"/>
    </location>
</feature>
<feature type="transmembrane region" description="Helical" evidence="1">
    <location>
        <begin position="307"/>
        <end position="327"/>
    </location>
</feature>
<feature type="transmembrane region" description="Helical" evidence="1">
    <location>
        <begin position="362"/>
        <end position="382"/>
    </location>
</feature>
<evidence type="ECO:0000255" key="1">
    <source>
        <dbReference type="HAMAP-Rule" id="MF_00038"/>
    </source>
</evidence>
<sequence>MLYYLIDYIERLYHPPGFQVIRFITVRAALASITALGIALGAGRGIIRWLRQQQLGEQVREGEAAGAISHAHKAGTPTMGGIIILLSVGGATLLWGAVANTYVWLSLVAMGGLGVVGFADDYVKTVRKQKDGLNAWYKVAGQVAVGLFVGSVLYFHPDFAAYNTFTFIPFLKDQVLDYDLFRFLELGVDLGWLVYLPVVVFIVTAVSNAVNLTDGLDGLTTGVTAFVSLGLVALVYVSGNAEFATFLNVMHLPGTGELTVFVAAVTAACFGFLWYNGYPATVFMGDTGALALGGAVGSTILMVRKELLLPLLGIVYFAEALSVIVQTSYFKYTRRRTGTGKRVFRMAPLHHHYEARGLHEAKIVTRFWIVTAITVIAALLILRIR</sequence>
<proteinExistence type="inferred from homology"/>
<dbReference type="EC" id="2.7.8.13" evidence="1"/>
<dbReference type="EMBL" id="CP000159">
    <property type="protein sequence ID" value="ABC43942.1"/>
    <property type="molecule type" value="Genomic_DNA"/>
</dbReference>
<dbReference type="RefSeq" id="WP_011403333.1">
    <property type="nucleotide sequence ID" value="NC_007677.1"/>
</dbReference>
<dbReference type="RefSeq" id="YP_444700.1">
    <property type="nucleotide sequence ID" value="NC_007677.1"/>
</dbReference>
<dbReference type="SMR" id="Q2S531"/>
<dbReference type="STRING" id="309807.SRU_0557"/>
<dbReference type="EnsemblBacteria" id="ABC43942">
    <property type="protein sequence ID" value="ABC43942"/>
    <property type="gene ID" value="SRU_0557"/>
</dbReference>
<dbReference type="KEGG" id="sru:SRU_0557"/>
<dbReference type="PATRIC" id="fig|309807.25.peg.579"/>
<dbReference type="eggNOG" id="COG0472">
    <property type="taxonomic scope" value="Bacteria"/>
</dbReference>
<dbReference type="HOGENOM" id="CLU_023982_0_0_10"/>
<dbReference type="OrthoDB" id="9805475at2"/>
<dbReference type="UniPathway" id="UPA00219"/>
<dbReference type="Proteomes" id="UP000008674">
    <property type="component" value="Chromosome"/>
</dbReference>
<dbReference type="GO" id="GO:0005886">
    <property type="term" value="C:plasma membrane"/>
    <property type="evidence" value="ECO:0007669"/>
    <property type="project" value="UniProtKB-SubCell"/>
</dbReference>
<dbReference type="GO" id="GO:0046872">
    <property type="term" value="F:metal ion binding"/>
    <property type="evidence" value="ECO:0007669"/>
    <property type="project" value="UniProtKB-KW"/>
</dbReference>
<dbReference type="GO" id="GO:0008963">
    <property type="term" value="F:phospho-N-acetylmuramoyl-pentapeptide-transferase activity"/>
    <property type="evidence" value="ECO:0007669"/>
    <property type="project" value="UniProtKB-UniRule"/>
</dbReference>
<dbReference type="GO" id="GO:0051992">
    <property type="term" value="F:UDP-N-acetylmuramoyl-L-alanyl-D-glutamyl-meso-2,6-diaminopimelyl-D-alanyl-D-alanine:undecaprenyl-phosphate transferase activity"/>
    <property type="evidence" value="ECO:0007669"/>
    <property type="project" value="RHEA"/>
</dbReference>
<dbReference type="GO" id="GO:0051301">
    <property type="term" value="P:cell division"/>
    <property type="evidence" value="ECO:0007669"/>
    <property type="project" value="UniProtKB-KW"/>
</dbReference>
<dbReference type="GO" id="GO:0071555">
    <property type="term" value="P:cell wall organization"/>
    <property type="evidence" value="ECO:0007669"/>
    <property type="project" value="UniProtKB-KW"/>
</dbReference>
<dbReference type="GO" id="GO:0009252">
    <property type="term" value="P:peptidoglycan biosynthetic process"/>
    <property type="evidence" value="ECO:0007669"/>
    <property type="project" value="UniProtKB-UniRule"/>
</dbReference>
<dbReference type="GO" id="GO:0008360">
    <property type="term" value="P:regulation of cell shape"/>
    <property type="evidence" value="ECO:0007669"/>
    <property type="project" value="UniProtKB-KW"/>
</dbReference>
<dbReference type="CDD" id="cd06852">
    <property type="entry name" value="GT_MraY"/>
    <property type="match status" value="1"/>
</dbReference>
<dbReference type="HAMAP" id="MF_00038">
    <property type="entry name" value="MraY"/>
    <property type="match status" value="1"/>
</dbReference>
<dbReference type="InterPro" id="IPR000715">
    <property type="entry name" value="Glycosyl_transferase_4"/>
</dbReference>
<dbReference type="InterPro" id="IPR003524">
    <property type="entry name" value="PNAcMuramoyl-5peptid_Trfase"/>
</dbReference>
<dbReference type="InterPro" id="IPR018480">
    <property type="entry name" value="PNAcMuramoyl-5peptid_Trfase_CS"/>
</dbReference>
<dbReference type="NCBIfam" id="TIGR00445">
    <property type="entry name" value="mraY"/>
    <property type="match status" value="1"/>
</dbReference>
<dbReference type="PANTHER" id="PTHR22926">
    <property type="entry name" value="PHOSPHO-N-ACETYLMURAMOYL-PENTAPEPTIDE-TRANSFERASE"/>
    <property type="match status" value="1"/>
</dbReference>
<dbReference type="PANTHER" id="PTHR22926:SF5">
    <property type="entry name" value="PHOSPHO-N-ACETYLMURAMOYL-PENTAPEPTIDE-TRANSFERASE HOMOLOG"/>
    <property type="match status" value="1"/>
</dbReference>
<dbReference type="Pfam" id="PF00953">
    <property type="entry name" value="Glycos_transf_4"/>
    <property type="match status" value="1"/>
</dbReference>
<dbReference type="Pfam" id="PF10555">
    <property type="entry name" value="MraY_sig1"/>
    <property type="match status" value="1"/>
</dbReference>
<dbReference type="PROSITE" id="PS01347">
    <property type="entry name" value="MRAY_1"/>
    <property type="match status" value="1"/>
</dbReference>
<dbReference type="PROSITE" id="PS01348">
    <property type="entry name" value="MRAY_2"/>
    <property type="match status" value="1"/>
</dbReference>
<accession>Q2S531</accession>
<comment type="function">
    <text evidence="1">Catalyzes the initial step of the lipid cycle reactions in the biosynthesis of the cell wall peptidoglycan: transfers peptidoglycan precursor phospho-MurNAc-pentapeptide from UDP-MurNAc-pentapeptide onto the lipid carrier undecaprenyl phosphate, yielding undecaprenyl-pyrophosphoryl-MurNAc-pentapeptide, known as lipid I.</text>
</comment>
<comment type="catalytic activity">
    <reaction evidence="1">
        <text>UDP-N-acetyl-alpha-D-muramoyl-L-alanyl-gamma-D-glutamyl-meso-2,6-diaminopimeloyl-D-alanyl-D-alanine + di-trans,octa-cis-undecaprenyl phosphate = di-trans,octa-cis-undecaprenyl diphospho-N-acetyl-alpha-D-muramoyl-L-alanyl-D-glutamyl-meso-2,6-diaminopimeloyl-D-alanyl-D-alanine + UMP</text>
        <dbReference type="Rhea" id="RHEA:28386"/>
        <dbReference type="ChEBI" id="CHEBI:57865"/>
        <dbReference type="ChEBI" id="CHEBI:60392"/>
        <dbReference type="ChEBI" id="CHEBI:61386"/>
        <dbReference type="ChEBI" id="CHEBI:61387"/>
        <dbReference type="EC" id="2.7.8.13"/>
    </reaction>
</comment>
<comment type="cofactor">
    <cofactor evidence="1">
        <name>Mg(2+)</name>
        <dbReference type="ChEBI" id="CHEBI:18420"/>
    </cofactor>
</comment>
<comment type="pathway">
    <text evidence="1">Cell wall biogenesis; peptidoglycan biosynthesis.</text>
</comment>
<comment type="subcellular location">
    <subcellularLocation>
        <location evidence="1">Cell inner membrane</location>
        <topology evidence="1">Multi-pass membrane protein</topology>
    </subcellularLocation>
</comment>
<comment type="similarity">
    <text evidence="1">Belongs to the glycosyltransferase 4 family. MraY subfamily.</text>
</comment>
<protein>
    <recommendedName>
        <fullName evidence="1">Phospho-N-acetylmuramoyl-pentapeptide-transferase</fullName>
        <ecNumber evidence="1">2.7.8.13</ecNumber>
    </recommendedName>
    <alternativeName>
        <fullName evidence="1">UDP-MurNAc-pentapeptide phosphotransferase</fullName>
    </alternativeName>
</protein>
<keyword id="KW-0131">Cell cycle</keyword>
<keyword id="KW-0132">Cell division</keyword>
<keyword id="KW-0997">Cell inner membrane</keyword>
<keyword id="KW-1003">Cell membrane</keyword>
<keyword id="KW-0133">Cell shape</keyword>
<keyword id="KW-0961">Cell wall biogenesis/degradation</keyword>
<keyword id="KW-0460">Magnesium</keyword>
<keyword id="KW-0472">Membrane</keyword>
<keyword id="KW-0479">Metal-binding</keyword>
<keyword id="KW-0573">Peptidoglycan synthesis</keyword>
<keyword id="KW-1185">Reference proteome</keyword>
<keyword id="KW-0808">Transferase</keyword>
<keyword id="KW-0812">Transmembrane</keyword>
<keyword id="KW-1133">Transmembrane helix</keyword>
<reference key="1">
    <citation type="journal article" date="2005" name="Proc. Natl. Acad. Sci. U.S.A.">
        <title>The genome of Salinibacter ruber: convergence and gene exchange among hyperhalophilic bacteria and archaea.</title>
        <authorList>
            <person name="Mongodin E.F."/>
            <person name="Nelson K.E."/>
            <person name="Daugherty S."/>
            <person name="DeBoy R.T."/>
            <person name="Wister J."/>
            <person name="Khouri H."/>
            <person name="Weidman J."/>
            <person name="Walsh D.A."/>
            <person name="Papke R.T."/>
            <person name="Sanchez Perez G."/>
            <person name="Sharma A.K."/>
            <person name="Nesbo C.L."/>
            <person name="MacLeod D."/>
            <person name="Bapteste E."/>
            <person name="Doolittle W.F."/>
            <person name="Charlebois R.L."/>
            <person name="Legault B."/>
            <person name="Rodriguez-Valera F."/>
        </authorList>
    </citation>
    <scope>NUCLEOTIDE SEQUENCE [LARGE SCALE GENOMIC DNA]</scope>
    <source>
        <strain>DSM 13855 / CECT 5946 / M31</strain>
    </source>
</reference>
<organism>
    <name type="scientific">Salinibacter ruber (strain DSM 13855 / M31)</name>
    <dbReference type="NCBI Taxonomy" id="309807"/>
    <lineage>
        <taxon>Bacteria</taxon>
        <taxon>Pseudomonadati</taxon>
        <taxon>Rhodothermota</taxon>
        <taxon>Rhodothermia</taxon>
        <taxon>Rhodothermales</taxon>
        <taxon>Salinibacteraceae</taxon>
        <taxon>Salinibacter</taxon>
    </lineage>
</organism>
<name>MRAY_SALRD</name>
<gene>
    <name evidence="1" type="primary">mraY</name>
    <name type="ordered locus">SRU_0557</name>
</gene>